<protein>
    <recommendedName>
        <fullName evidence="1">Chorismate synthase</fullName>
        <shortName evidence="1">CS</shortName>
        <ecNumber evidence="1">4.2.3.5</ecNumber>
    </recommendedName>
    <alternativeName>
        <fullName evidence="1">5-enolpyruvylshikimate-3-phosphate phospholyase</fullName>
    </alternativeName>
</protein>
<comment type="function">
    <text evidence="1">Catalyzes the anti-1,4-elimination of the C-3 phosphate and the C-6 proR hydrogen from 5-enolpyruvylshikimate-3-phosphate (EPSP) to yield chorismate, which is the branch point compound that serves as the starting substrate for the three terminal pathways of aromatic amino acid biosynthesis. This reaction introduces a second double bond into the aromatic ring system.</text>
</comment>
<comment type="catalytic activity">
    <reaction evidence="1">
        <text>5-O-(1-carboxyvinyl)-3-phosphoshikimate = chorismate + phosphate</text>
        <dbReference type="Rhea" id="RHEA:21020"/>
        <dbReference type="ChEBI" id="CHEBI:29748"/>
        <dbReference type="ChEBI" id="CHEBI:43474"/>
        <dbReference type="ChEBI" id="CHEBI:57701"/>
        <dbReference type="EC" id="4.2.3.5"/>
    </reaction>
</comment>
<comment type="cofactor">
    <cofactor evidence="1">
        <name>FMNH2</name>
        <dbReference type="ChEBI" id="CHEBI:57618"/>
    </cofactor>
    <text evidence="1">Reduced FMN (FMNH(2)).</text>
</comment>
<comment type="pathway">
    <text evidence="1">Metabolic intermediate biosynthesis; chorismate biosynthesis; chorismate from D-erythrose 4-phosphate and phosphoenolpyruvate: step 7/7.</text>
</comment>
<comment type="similarity">
    <text evidence="1">Belongs to the chorismate synthase family.</text>
</comment>
<gene>
    <name evidence="1" type="primary">aroC</name>
    <name type="ordered locus">Kcr_0952</name>
</gene>
<reference key="1">
    <citation type="journal article" date="2008" name="Proc. Natl. Acad. Sci. U.S.A.">
        <title>A korarchaeal genome reveals new insights into the evolution of the Archaea.</title>
        <authorList>
            <person name="Elkins J.G."/>
            <person name="Podar M."/>
            <person name="Graham D.E."/>
            <person name="Makarova K.S."/>
            <person name="Wolf Y."/>
            <person name="Randau L."/>
            <person name="Hedlund B.P."/>
            <person name="Brochier-Armanet C."/>
            <person name="Kunin V."/>
            <person name="Anderson I."/>
            <person name="Lapidus A."/>
            <person name="Goltsman E."/>
            <person name="Barry K."/>
            <person name="Koonin E.V."/>
            <person name="Hugenholtz P."/>
            <person name="Kyrpides N."/>
            <person name="Wanner G."/>
            <person name="Richardson P."/>
            <person name="Keller M."/>
            <person name="Stetter K.O."/>
        </authorList>
    </citation>
    <scope>NUCLEOTIDE SEQUENCE [LARGE SCALE GENOMIC DNA]</scope>
    <source>
        <strain>OPF8</strain>
    </source>
</reference>
<proteinExistence type="inferred from homology"/>
<name>AROC_KORCO</name>
<dbReference type="EC" id="4.2.3.5" evidence="1"/>
<dbReference type="EMBL" id="CP000968">
    <property type="protein sequence ID" value="ACB07698.1"/>
    <property type="molecule type" value="Genomic_DNA"/>
</dbReference>
<dbReference type="RefSeq" id="WP_012309595.1">
    <property type="nucleotide sequence ID" value="NC_010482.1"/>
</dbReference>
<dbReference type="SMR" id="B1L5G9"/>
<dbReference type="FunCoup" id="B1L5G9">
    <property type="interactions" value="96"/>
</dbReference>
<dbReference type="STRING" id="374847.Kcr_0952"/>
<dbReference type="EnsemblBacteria" id="ACB07698">
    <property type="protein sequence ID" value="ACB07698"/>
    <property type="gene ID" value="Kcr_0952"/>
</dbReference>
<dbReference type="GeneID" id="6094229"/>
<dbReference type="KEGG" id="kcr:Kcr_0952"/>
<dbReference type="eggNOG" id="arCOG04133">
    <property type="taxonomic scope" value="Archaea"/>
</dbReference>
<dbReference type="HOGENOM" id="CLU_034547_0_0_2"/>
<dbReference type="InParanoid" id="B1L5G9"/>
<dbReference type="OrthoDB" id="33049at2157"/>
<dbReference type="PhylomeDB" id="B1L5G9"/>
<dbReference type="UniPathway" id="UPA00053">
    <property type="reaction ID" value="UER00090"/>
</dbReference>
<dbReference type="Proteomes" id="UP000001686">
    <property type="component" value="Chromosome"/>
</dbReference>
<dbReference type="GO" id="GO:0005829">
    <property type="term" value="C:cytosol"/>
    <property type="evidence" value="ECO:0000318"/>
    <property type="project" value="GO_Central"/>
</dbReference>
<dbReference type="GO" id="GO:0004107">
    <property type="term" value="F:chorismate synthase activity"/>
    <property type="evidence" value="ECO:0000318"/>
    <property type="project" value="GO_Central"/>
</dbReference>
<dbReference type="GO" id="GO:0010181">
    <property type="term" value="F:FMN binding"/>
    <property type="evidence" value="ECO:0000318"/>
    <property type="project" value="GO_Central"/>
</dbReference>
<dbReference type="GO" id="GO:0008652">
    <property type="term" value="P:amino acid biosynthetic process"/>
    <property type="evidence" value="ECO:0007669"/>
    <property type="project" value="UniProtKB-KW"/>
</dbReference>
<dbReference type="GO" id="GO:0009073">
    <property type="term" value="P:aromatic amino acid family biosynthetic process"/>
    <property type="evidence" value="ECO:0000318"/>
    <property type="project" value="GO_Central"/>
</dbReference>
<dbReference type="GO" id="GO:0009423">
    <property type="term" value="P:chorismate biosynthetic process"/>
    <property type="evidence" value="ECO:0000318"/>
    <property type="project" value="GO_Central"/>
</dbReference>
<dbReference type="CDD" id="cd07304">
    <property type="entry name" value="Chorismate_synthase"/>
    <property type="match status" value="1"/>
</dbReference>
<dbReference type="FunFam" id="3.60.150.10:FF:000002">
    <property type="entry name" value="Chorismate synthase"/>
    <property type="match status" value="1"/>
</dbReference>
<dbReference type="Gene3D" id="3.60.150.10">
    <property type="entry name" value="Chorismate synthase AroC"/>
    <property type="match status" value="1"/>
</dbReference>
<dbReference type="HAMAP" id="MF_00300">
    <property type="entry name" value="Chorismate_synth"/>
    <property type="match status" value="1"/>
</dbReference>
<dbReference type="InterPro" id="IPR000453">
    <property type="entry name" value="Chorismate_synth"/>
</dbReference>
<dbReference type="InterPro" id="IPR035904">
    <property type="entry name" value="Chorismate_synth_AroC_sf"/>
</dbReference>
<dbReference type="InterPro" id="IPR020541">
    <property type="entry name" value="Chorismate_synthase_CS"/>
</dbReference>
<dbReference type="NCBIfam" id="TIGR00033">
    <property type="entry name" value="aroC"/>
    <property type="match status" value="1"/>
</dbReference>
<dbReference type="NCBIfam" id="NF003793">
    <property type="entry name" value="PRK05382.1"/>
    <property type="match status" value="1"/>
</dbReference>
<dbReference type="PANTHER" id="PTHR21085">
    <property type="entry name" value="CHORISMATE SYNTHASE"/>
    <property type="match status" value="1"/>
</dbReference>
<dbReference type="PANTHER" id="PTHR21085:SF0">
    <property type="entry name" value="CHORISMATE SYNTHASE"/>
    <property type="match status" value="1"/>
</dbReference>
<dbReference type="Pfam" id="PF01264">
    <property type="entry name" value="Chorismate_synt"/>
    <property type="match status" value="1"/>
</dbReference>
<dbReference type="PIRSF" id="PIRSF001456">
    <property type="entry name" value="Chorismate_synth"/>
    <property type="match status" value="1"/>
</dbReference>
<dbReference type="SUPFAM" id="SSF103263">
    <property type="entry name" value="Chorismate synthase, AroC"/>
    <property type="match status" value="1"/>
</dbReference>
<dbReference type="PROSITE" id="PS00787">
    <property type="entry name" value="CHORISMATE_SYNTHASE_1"/>
    <property type="match status" value="1"/>
</dbReference>
<dbReference type="PROSITE" id="PS00789">
    <property type="entry name" value="CHORISMATE_SYNTHASE_3"/>
    <property type="match status" value="1"/>
</dbReference>
<organism>
    <name type="scientific">Korarchaeum cryptofilum (strain OPF8)</name>
    <dbReference type="NCBI Taxonomy" id="374847"/>
    <lineage>
        <taxon>Archaea</taxon>
        <taxon>Thermoproteota</taxon>
        <taxon>Candidatus Korarchaeia</taxon>
        <taxon>Candidatus Korarchaeales</taxon>
        <taxon>Candidatus Korarchaeaceae</taxon>
        <taxon>Candidatus Korarchaeum</taxon>
    </lineage>
</organism>
<feature type="chain" id="PRO_1000115361" description="Chorismate synthase">
    <location>
        <begin position="1"/>
        <end position="361"/>
    </location>
</feature>
<feature type="binding site" evidence="1">
    <location>
        <position position="48"/>
    </location>
    <ligand>
        <name>NADP(+)</name>
        <dbReference type="ChEBI" id="CHEBI:58349"/>
    </ligand>
</feature>
<feature type="binding site" evidence="1">
    <location>
        <begin position="126"/>
        <end position="128"/>
    </location>
    <ligand>
        <name>FMN</name>
        <dbReference type="ChEBI" id="CHEBI:58210"/>
    </ligand>
</feature>
<feature type="binding site" evidence="1">
    <location>
        <position position="286"/>
    </location>
    <ligand>
        <name>FMN</name>
        <dbReference type="ChEBI" id="CHEBI:58210"/>
    </ligand>
</feature>
<feature type="binding site" evidence="1">
    <location>
        <begin position="301"/>
        <end position="305"/>
    </location>
    <ligand>
        <name>FMN</name>
        <dbReference type="ChEBI" id="CHEBI:58210"/>
    </ligand>
</feature>
<feature type="binding site" evidence="1">
    <location>
        <position position="328"/>
    </location>
    <ligand>
        <name>FMN</name>
        <dbReference type="ChEBI" id="CHEBI:58210"/>
    </ligand>
</feature>
<evidence type="ECO:0000255" key="1">
    <source>
        <dbReference type="HAMAP-Rule" id="MF_00300"/>
    </source>
</evidence>
<sequence>MGGDIFGRELRLISFGESHGPVVGAIVEGAPAGLPLSEEDVQRILDLRRPGQSELVSQRAERDRVEILSGVFNGFTTGAPISMIVRNEDIDSSYYEEISRFPRPGHADYVARLKYSGYNDFRGGGRFSGRLTVSMCMAGAVAMKILEKLGIEVMAYSLEIGGERAEGFTLDDARNYRYMNPVRAPNEESYLRMAAAIERARREGDSLGGIVEAIALNVPPGLGEPIFDTIEGDIAKAMFSIPAVKGVEFGSGFRAARMRGSEHNDPIRVIDGKIRYKKNDHGGAIGGITTGEPIILRVAFKPTPSIAKPQETVDLELLRNVEIKVKGRHDPCVVPRAVVVVESMLAFTIADHIMRSMRGAI</sequence>
<keyword id="KW-0028">Amino-acid biosynthesis</keyword>
<keyword id="KW-0057">Aromatic amino acid biosynthesis</keyword>
<keyword id="KW-0274">FAD</keyword>
<keyword id="KW-0285">Flavoprotein</keyword>
<keyword id="KW-0288">FMN</keyword>
<keyword id="KW-0456">Lyase</keyword>
<keyword id="KW-0521">NADP</keyword>
<keyword id="KW-1185">Reference proteome</keyword>
<accession>B1L5G9</accession>